<organism>
    <name type="scientific">Mycobacterium bovis (strain ATCC BAA-935 / AF2122/97)</name>
    <dbReference type="NCBI Taxonomy" id="233413"/>
    <lineage>
        <taxon>Bacteria</taxon>
        <taxon>Bacillati</taxon>
        <taxon>Actinomycetota</taxon>
        <taxon>Actinomycetes</taxon>
        <taxon>Mycobacteriales</taxon>
        <taxon>Mycobacteriaceae</taxon>
        <taxon>Mycobacterium</taxon>
        <taxon>Mycobacterium tuberculosis complex</taxon>
    </lineage>
</organism>
<keyword id="KW-1185">Reference proteome</keyword>
<reference key="1">
    <citation type="journal article" date="2003" name="Proc. Natl. Acad. Sci. U.S.A.">
        <title>The complete genome sequence of Mycobacterium bovis.</title>
        <authorList>
            <person name="Garnier T."/>
            <person name="Eiglmeier K."/>
            <person name="Camus J.-C."/>
            <person name="Medina N."/>
            <person name="Mansoor H."/>
            <person name="Pryor M."/>
            <person name="Duthoy S."/>
            <person name="Grondin S."/>
            <person name="Lacroix C."/>
            <person name="Monsempe C."/>
            <person name="Simon S."/>
            <person name="Harris B."/>
            <person name="Atkin R."/>
            <person name="Doggett J."/>
            <person name="Mayes R."/>
            <person name="Keating L."/>
            <person name="Wheeler P.R."/>
            <person name="Parkhill J."/>
            <person name="Barrell B.G."/>
            <person name="Cole S.T."/>
            <person name="Gordon S.V."/>
            <person name="Hewinson R.G."/>
        </authorList>
    </citation>
    <scope>NUCLEOTIDE SEQUENCE [LARGE SCALE GENOMIC DNA]</scope>
    <source>
        <strain>ATCC BAA-935 / AF2122/97</strain>
    </source>
</reference>
<reference key="2">
    <citation type="journal article" date="2017" name="Genome Announc.">
        <title>Updated reference genome sequence and annotation of Mycobacterium bovis AF2122/97.</title>
        <authorList>
            <person name="Malone K.M."/>
            <person name="Farrell D."/>
            <person name="Stuber T.P."/>
            <person name="Schubert O.T."/>
            <person name="Aebersold R."/>
            <person name="Robbe-Austerman S."/>
            <person name="Gordon S.V."/>
        </authorList>
    </citation>
    <scope>NUCLEOTIDE SEQUENCE [LARGE SCALE GENOMIC DNA]</scope>
    <scope>GENOME REANNOTATION</scope>
    <source>
        <strain>ATCC BAA-935 / AF2122/97</strain>
    </source>
</reference>
<name>Y2304_MYCBO</name>
<gene>
    <name type="ordered locus">BQ2027_MB2304</name>
</gene>
<dbReference type="EMBL" id="LT708304">
    <property type="protein sequence ID" value="SIU00916.1"/>
    <property type="molecule type" value="Genomic_DNA"/>
</dbReference>
<dbReference type="RefSeq" id="NP_855953.1">
    <property type="nucleotide sequence ID" value="NC_002945.3"/>
</dbReference>
<dbReference type="RefSeq" id="WP_003902159.1">
    <property type="nucleotide sequence ID" value="NC_002945.4"/>
</dbReference>
<dbReference type="KEGG" id="mbo:BQ2027_MB2304"/>
<dbReference type="Proteomes" id="UP000001419">
    <property type="component" value="Chromosome"/>
</dbReference>
<evidence type="ECO:0000256" key="1">
    <source>
        <dbReference type="SAM" id="MobiDB-lite"/>
    </source>
</evidence>
<sequence length="64" mass="6557">MLEKCPHASVDCGASKIGITDNDPATATNRRLASTIRKPPIEHAAGPLGSTSRAGHRSYGGVAS</sequence>
<accession>P64974</accession>
<accession>A0A1R3Y0Y3</accession>
<accession>Q50682</accession>
<accession>X2BJU4</accession>
<proteinExistence type="predicted"/>
<protein>
    <recommendedName>
        <fullName>Uncharacterized protein Mb2304</fullName>
    </recommendedName>
</protein>
<feature type="chain" id="PRO_0000104005" description="Uncharacterized protein Mb2304">
    <location>
        <begin position="1"/>
        <end position="64"/>
    </location>
</feature>
<feature type="region of interest" description="Disordered" evidence="1">
    <location>
        <begin position="35"/>
        <end position="64"/>
    </location>
</feature>